<evidence type="ECO:0000255" key="1">
    <source>
        <dbReference type="HAMAP-Rule" id="MF_01220"/>
    </source>
</evidence>
<dbReference type="EC" id="2.7.4.22" evidence="1"/>
<dbReference type="EMBL" id="CP000563">
    <property type="protein sequence ID" value="ABN60970.1"/>
    <property type="molecule type" value="Genomic_DNA"/>
</dbReference>
<dbReference type="RefSeq" id="WP_006080981.1">
    <property type="nucleotide sequence ID" value="NC_009052.1"/>
</dbReference>
<dbReference type="SMR" id="A3D2K7"/>
<dbReference type="STRING" id="325240.Sbal_1452"/>
<dbReference type="GeneID" id="11771732"/>
<dbReference type="KEGG" id="sbl:Sbal_1452"/>
<dbReference type="HOGENOM" id="CLU_033861_0_0_6"/>
<dbReference type="OrthoDB" id="9807458at2"/>
<dbReference type="UniPathway" id="UPA00159">
    <property type="reaction ID" value="UER00275"/>
</dbReference>
<dbReference type="Proteomes" id="UP000001557">
    <property type="component" value="Chromosome"/>
</dbReference>
<dbReference type="GO" id="GO:0005829">
    <property type="term" value="C:cytosol"/>
    <property type="evidence" value="ECO:0007669"/>
    <property type="project" value="TreeGrafter"/>
</dbReference>
<dbReference type="GO" id="GO:0005524">
    <property type="term" value="F:ATP binding"/>
    <property type="evidence" value="ECO:0007669"/>
    <property type="project" value="UniProtKB-KW"/>
</dbReference>
<dbReference type="GO" id="GO:0033862">
    <property type="term" value="F:UMP kinase activity"/>
    <property type="evidence" value="ECO:0007669"/>
    <property type="project" value="UniProtKB-EC"/>
</dbReference>
<dbReference type="GO" id="GO:0044210">
    <property type="term" value="P:'de novo' CTP biosynthetic process"/>
    <property type="evidence" value="ECO:0007669"/>
    <property type="project" value="UniProtKB-UniRule"/>
</dbReference>
<dbReference type="GO" id="GO:0006225">
    <property type="term" value="P:UDP biosynthetic process"/>
    <property type="evidence" value="ECO:0007669"/>
    <property type="project" value="TreeGrafter"/>
</dbReference>
<dbReference type="CDD" id="cd04254">
    <property type="entry name" value="AAK_UMPK-PyrH-Ec"/>
    <property type="match status" value="1"/>
</dbReference>
<dbReference type="FunFam" id="3.40.1160.10:FF:000001">
    <property type="entry name" value="Uridylate kinase"/>
    <property type="match status" value="1"/>
</dbReference>
<dbReference type="Gene3D" id="3.40.1160.10">
    <property type="entry name" value="Acetylglutamate kinase-like"/>
    <property type="match status" value="1"/>
</dbReference>
<dbReference type="HAMAP" id="MF_01220_B">
    <property type="entry name" value="PyrH_B"/>
    <property type="match status" value="1"/>
</dbReference>
<dbReference type="InterPro" id="IPR036393">
    <property type="entry name" value="AceGlu_kinase-like_sf"/>
</dbReference>
<dbReference type="InterPro" id="IPR001048">
    <property type="entry name" value="Asp/Glu/Uridylate_kinase"/>
</dbReference>
<dbReference type="InterPro" id="IPR011817">
    <property type="entry name" value="Uridylate_kinase"/>
</dbReference>
<dbReference type="InterPro" id="IPR015963">
    <property type="entry name" value="Uridylate_kinase_bac"/>
</dbReference>
<dbReference type="NCBIfam" id="TIGR02075">
    <property type="entry name" value="pyrH_bact"/>
    <property type="match status" value="1"/>
</dbReference>
<dbReference type="PANTHER" id="PTHR42833">
    <property type="entry name" value="URIDYLATE KINASE"/>
    <property type="match status" value="1"/>
</dbReference>
<dbReference type="PANTHER" id="PTHR42833:SF4">
    <property type="entry name" value="URIDYLATE KINASE PUMPKIN, CHLOROPLASTIC"/>
    <property type="match status" value="1"/>
</dbReference>
<dbReference type="Pfam" id="PF00696">
    <property type="entry name" value="AA_kinase"/>
    <property type="match status" value="1"/>
</dbReference>
<dbReference type="PIRSF" id="PIRSF005650">
    <property type="entry name" value="Uridylate_kin"/>
    <property type="match status" value="1"/>
</dbReference>
<dbReference type="SUPFAM" id="SSF53633">
    <property type="entry name" value="Carbamate kinase-like"/>
    <property type="match status" value="1"/>
</dbReference>
<protein>
    <recommendedName>
        <fullName evidence="1">Uridylate kinase</fullName>
        <shortName evidence="1">UK</shortName>
        <ecNumber evidence="1">2.7.4.22</ecNumber>
    </recommendedName>
    <alternativeName>
        <fullName evidence="1">Uridine monophosphate kinase</fullName>
        <shortName evidence="1">UMP kinase</shortName>
        <shortName evidence="1">UMPK</shortName>
    </alternativeName>
</protein>
<reference key="1">
    <citation type="submission" date="2007-02" db="EMBL/GenBank/DDBJ databases">
        <title>Complete sequence of chromosome of Shewanella baltica OS155.</title>
        <authorList>
            <consortium name="US DOE Joint Genome Institute"/>
            <person name="Copeland A."/>
            <person name="Lucas S."/>
            <person name="Lapidus A."/>
            <person name="Barry K."/>
            <person name="Detter J.C."/>
            <person name="Glavina del Rio T."/>
            <person name="Hammon N."/>
            <person name="Israni S."/>
            <person name="Dalin E."/>
            <person name="Tice H."/>
            <person name="Pitluck S."/>
            <person name="Sims D.R."/>
            <person name="Brettin T."/>
            <person name="Bruce D."/>
            <person name="Han C."/>
            <person name="Tapia R."/>
            <person name="Brainard J."/>
            <person name="Schmutz J."/>
            <person name="Larimer F."/>
            <person name="Land M."/>
            <person name="Hauser L."/>
            <person name="Kyrpides N."/>
            <person name="Mikhailova N."/>
            <person name="Brettar I."/>
            <person name="Klappenbach J."/>
            <person name="Konstantinidis K."/>
            <person name="Rodrigues J."/>
            <person name="Tiedje J."/>
            <person name="Richardson P."/>
        </authorList>
    </citation>
    <scope>NUCLEOTIDE SEQUENCE [LARGE SCALE GENOMIC DNA]</scope>
    <source>
        <strain>OS155 / ATCC BAA-1091</strain>
    </source>
</reference>
<feature type="chain" id="PRO_1000054005" description="Uridylate kinase">
    <location>
        <begin position="1"/>
        <end position="245"/>
    </location>
</feature>
<feature type="region of interest" description="Involved in allosteric activation by GTP" evidence="1">
    <location>
        <begin position="23"/>
        <end position="28"/>
    </location>
</feature>
<feature type="binding site" evidence="1">
    <location>
        <begin position="15"/>
        <end position="18"/>
    </location>
    <ligand>
        <name>ATP</name>
        <dbReference type="ChEBI" id="CHEBI:30616"/>
    </ligand>
</feature>
<feature type="binding site" evidence="1">
    <location>
        <position position="57"/>
    </location>
    <ligand>
        <name>UMP</name>
        <dbReference type="ChEBI" id="CHEBI:57865"/>
    </ligand>
</feature>
<feature type="binding site" evidence="1">
    <location>
        <position position="58"/>
    </location>
    <ligand>
        <name>ATP</name>
        <dbReference type="ChEBI" id="CHEBI:30616"/>
    </ligand>
</feature>
<feature type="binding site" evidence="1">
    <location>
        <position position="62"/>
    </location>
    <ligand>
        <name>ATP</name>
        <dbReference type="ChEBI" id="CHEBI:30616"/>
    </ligand>
</feature>
<feature type="binding site" evidence="1">
    <location>
        <position position="77"/>
    </location>
    <ligand>
        <name>UMP</name>
        <dbReference type="ChEBI" id="CHEBI:57865"/>
    </ligand>
</feature>
<feature type="binding site" evidence="1">
    <location>
        <begin position="138"/>
        <end position="145"/>
    </location>
    <ligand>
        <name>UMP</name>
        <dbReference type="ChEBI" id="CHEBI:57865"/>
    </ligand>
</feature>
<feature type="binding site" evidence="1">
    <location>
        <position position="165"/>
    </location>
    <ligand>
        <name>ATP</name>
        <dbReference type="ChEBI" id="CHEBI:30616"/>
    </ligand>
</feature>
<feature type="binding site" evidence="1">
    <location>
        <position position="171"/>
    </location>
    <ligand>
        <name>ATP</name>
        <dbReference type="ChEBI" id="CHEBI:30616"/>
    </ligand>
</feature>
<feature type="binding site" evidence="1">
    <location>
        <position position="174"/>
    </location>
    <ligand>
        <name>ATP</name>
        <dbReference type="ChEBI" id="CHEBI:30616"/>
    </ligand>
</feature>
<name>PYRH_SHEB5</name>
<gene>
    <name evidence="1" type="primary">pyrH</name>
    <name type="ordered locus">Sbal_1452</name>
</gene>
<proteinExistence type="inferred from homology"/>
<comment type="function">
    <text evidence="1">Catalyzes the reversible phosphorylation of UMP to UDP.</text>
</comment>
<comment type="catalytic activity">
    <reaction evidence="1">
        <text>UMP + ATP = UDP + ADP</text>
        <dbReference type="Rhea" id="RHEA:24400"/>
        <dbReference type="ChEBI" id="CHEBI:30616"/>
        <dbReference type="ChEBI" id="CHEBI:57865"/>
        <dbReference type="ChEBI" id="CHEBI:58223"/>
        <dbReference type="ChEBI" id="CHEBI:456216"/>
        <dbReference type="EC" id="2.7.4.22"/>
    </reaction>
</comment>
<comment type="activity regulation">
    <text evidence="1">Allosterically activated by GTP. Inhibited by UTP.</text>
</comment>
<comment type="pathway">
    <text evidence="1">Pyrimidine metabolism; CTP biosynthesis via de novo pathway; UDP from UMP (UMPK route): step 1/1.</text>
</comment>
<comment type="subunit">
    <text evidence="1">Homohexamer.</text>
</comment>
<comment type="subcellular location">
    <subcellularLocation>
        <location evidence="1">Cytoplasm</location>
    </subcellularLocation>
</comment>
<comment type="similarity">
    <text evidence="1">Belongs to the UMP kinase family.</text>
</comment>
<organism>
    <name type="scientific">Shewanella baltica (strain OS155 / ATCC BAA-1091)</name>
    <dbReference type="NCBI Taxonomy" id="325240"/>
    <lineage>
        <taxon>Bacteria</taxon>
        <taxon>Pseudomonadati</taxon>
        <taxon>Pseudomonadota</taxon>
        <taxon>Gammaproteobacteria</taxon>
        <taxon>Alteromonadales</taxon>
        <taxon>Shewanellaceae</taxon>
        <taxon>Shewanella</taxon>
    </lineage>
</organism>
<keyword id="KW-0021">Allosteric enzyme</keyword>
<keyword id="KW-0067">ATP-binding</keyword>
<keyword id="KW-0963">Cytoplasm</keyword>
<keyword id="KW-0418">Kinase</keyword>
<keyword id="KW-0547">Nucleotide-binding</keyword>
<keyword id="KW-0665">Pyrimidine biosynthesis</keyword>
<keyword id="KW-1185">Reference proteome</keyword>
<keyword id="KW-0808">Transferase</keyword>
<accession>A3D2K7</accession>
<sequence>MSTNPKPAFRRILLKLSGEALMGDEGFGIDPKVLDRMAQEVKELVELGIQVGVVIGGGNLFRGEGLAKAGMNRVVGDHMGMLATVMNGLAMRDALHRAYVNARLMSAIPLKGVCDDYNWAEAISLLKSGRVVIFAAGTGNPFCTTDSAACLRGIEIEAEVVLKGTKVDGVYSEDPMKNPDAVKYDEVTYAEILEKELKVMDLAAFTMARDHDMPILVFNMNKPGALRRVIMGEEEGTLIRAKKVI</sequence>